<proteinExistence type="inferred from homology"/>
<accession>A8GE50</accession>
<gene>
    <name type="ordered locus">Spro_2289</name>
</gene>
<feature type="chain" id="PRO_1000057084" description="UPF0060 membrane protein Spro_2289">
    <location>
        <begin position="1"/>
        <end position="108"/>
    </location>
</feature>
<feature type="transmembrane region" description="Helical" evidence="1">
    <location>
        <begin position="6"/>
        <end position="26"/>
    </location>
</feature>
<feature type="transmembrane region" description="Helical" evidence="1">
    <location>
        <begin position="31"/>
        <end position="51"/>
    </location>
</feature>
<feature type="transmembrane region" description="Helical" evidence="1">
    <location>
        <begin position="61"/>
        <end position="81"/>
    </location>
</feature>
<feature type="transmembrane region" description="Helical" evidence="1">
    <location>
        <begin position="85"/>
        <end position="105"/>
    </location>
</feature>
<name>Y2289_SERP5</name>
<reference key="1">
    <citation type="submission" date="2007-09" db="EMBL/GenBank/DDBJ databases">
        <title>Complete sequence of chromosome of Serratia proteamaculans 568.</title>
        <authorList>
            <consortium name="US DOE Joint Genome Institute"/>
            <person name="Copeland A."/>
            <person name="Lucas S."/>
            <person name="Lapidus A."/>
            <person name="Barry K."/>
            <person name="Glavina del Rio T."/>
            <person name="Dalin E."/>
            <person name="Tice H."/>
            <person name="Pitluck S."/>
            <person name="Chain P."/>
            <person name="Malfatti S."/>
            <person name="Shin M."/>
            <person name="Vergez L."/>
            <person name="Schmutz J."/>
            <person name="Larimer F."/>
            <person name="Land M."/>
            <person name="Hauser L."/>
            <person name="Kyrpides N."/>
            <person name="Kim E."/>
            <person name="Taghavi S."/>
            <person name="Newman L."/>
            <person name="Vangronsveld J."/>
            <person name="van der Lelie D."/>
            <person name="Richardson P."/>
        </authorList>
    </citation>
    <scope>NUCLEOTIDE SEQUENCE [LARGE SCALE GENOMIC DNA]</scope>
    <source>
        <strain>568</strain>
    </source>
</reference>
<keyword id="KW-0997">Cell inner membrane</keyword>
<keyword id="KW-1003">Cell membrane</keyword>
<keyword id="KW-0472">Membrane</keyword>
<keyword id="KW-0812">Transmembrane</keyword>
<keyword id="KW-1133">Transmembrane helix</keyword>
<organism>
    <name type="scientific">Serratia proteamaculans (strain 568)</name>
    <dbReference type="NCBI Taxonomy" id="399741"/>
    <lineage>
        <taxon>Bacteria</taxon>
        <taxon>Pseudomonadati</taxon>
        <taxon>Pseudomonadota</taxon>
        <taxon>Gammaproteobacteria</taxon>
        <taxon>Enterobacterales</taxon>
        <taxon>Yersiniaceae</taxon>
        <taxon>Serratia</taxon>
    </lineage>
</organism>
<sequence length="108" mass="11553">MLKTTLLFFATALAEIIGCFLPYLWLKKSASAWLLLPAAASLMLFVWLLTLHPAASGRVYAAYGGVYVATALLWLRVVDGVKLSALDWLGAGVALAGMLIIVSGWRAA</sequence>
<dbReference type="EMBL" id="CP000826">
    <property type="protein sequence ID" value="ABV41390.1"/>
    <property type="molecule type" value="Genomic_DNA"/>
</dbReference>
<dbReference type="SMR" id="A8GE50"/>
<dbReference type="KEGG" id="spe:Spro_2289"/>
<dbReference type="eggNOG" id="COG1742">
    <property type="taxonomic scope" value="Bacteria"/>
</dbReference>
<dbReference type="HOGENOM" id="CLU_117653_2_1_6"/>
<dbReference type="OrthoDB" id="123240at2"/>
<dbReference type="GO" id="GO:0005886">
    <property type="term" value="C:plasma membrane"/>
    <property type="evidence" value="ECO:0007669"/>
    <property type="project" value="UniProtKB-SubCell"/>
</dbReference>
<dbReference type="HAMAP" id="MF_00010">
    <property type="entry name" value="UPF0060"/>
    <property type="match status" value="1"/>
</dbReference>
<dbReference type="InterPro" id="IPR003844">
    <property type="entry name" value="UPF0060"/>
</dbReference>
<dbReference type="NCBIfam" id="NF002586">
    <property type="entry name" value="PRK02237.1"/>
    <property type="match status" value="1"/>
</dbReference>
<dbReference type="PANTHER" id="PTHR36116">
    <property type="entry name" value="UPF0060 MEMBRANE PROTEIN YNFA"/>
    <property type="match status" value="1"/>
</dbReference>
<dbReference type="PANTHER" id="PTHR36116:SF1">
    <property type="entry name" value="UPF0060 MEMBRANE PROTEIN YNFA"/>
    <property type="match status" value="1"/>
</dbReference>
<dbReference type="Pfam" id="PF02694">
    <property type="entry name" value="UPF0060"/>
    <property type="match status" value="1"/>
</dbReference>
<dbReference type="SUPFAM" id="SSF103481">
    <property type="entry name" value="Multidrug resistance efflux transporter EmrE"/>
    <property type="match status" value="1"/>
</dbReference>
<evidence type="ECO:0000255" key="1">
    <source>
        <dbReference type="HAMAP-Rule" id="MF_00010"/>
    </source>
</evidence>
<comment type="subcellular location">
    <subcellularLocation>
        <location evidence="1">Cell inner membrane</location>
        <topology evidence="1">Multi-pass membrane protein</topology>
    </subcellularLocation>
</comment>
<comment type="similarity">
    <text evidence="1">Belongs to the UPF0060 family.</text>
</comment>
<protein>
    <recommendedName>
        <fullName evidence="1">UPF0060 membrane protein Spro_2289</fullName>
    </recommendedName>
</protein>